<evidence type="ECO:0000255" key="1">
    <source>
        <dbReference type="HAMAP-Rule" id="MF_01039"/>
    </source>
</evidence>
<keyword id="KW-0312">Gluconeogenesis</keyword>
<keyword id="KW-0324">Glycolysis</keyword>
<keyword id="KW-0413">Isomerase</keyword>
<feature type="chain" id="PRO_0000179863" description="2,3-bisphosphoglycerate-dependent phosphoglycerate mutase">
    <location>
        <begin position="1"/>
        <end position="227"/>
    </location>
</feature>
<feature type="active site" description="Tele-phosphohistidine intermediate" evidence="1">
    <location>
        <position position="9"/>
    </location>
</feature>
<feature type="active site" description="Proton donor/acceptor" evidence="1">
    <location>
        <position position="110"/>
    </location>
</feature>
<feature type="binding site" evidence="1">
    <location>
        <begin position="8"/>
        <end position="15"/>
    </location>
    <ligand>
        <name>substrate</name>
    </ligand>
</feature>
<feature type="binding site" evidence="1">
    <location>
        <begin position="21"/>
        <end position="22"/>
    </location>
    <ligand>
        <name>substrate</name>
    </ligand>
</feature>
<feature type="binding site" evidence="1">
    <location>
        <position position="58"/>
    </location>
    <ligand>
        <name>substrate</name>
    </ligand>
</feature>
<feature type="binding site" evidence="1">
    <location>
        <begin position="110"/>
        <end position="113"/>
    </location>
    <ligand>
        <name>substrate</name>
    </ligand>
</feature>
<feature type="binding site" evidence="1">
    <location>
        <position position="121"/>
    </location>
    <ligand>
        <name>substrate</name>
    </ligand>
</feature>
<feature type="binding site" evidence="1">
    <location>
        <begin position="137"/>
        <end position="138"/>
    </location>
    <ligand>
        <name>substrate</name>
    </ligand>
</feature>
<feature type="binding site" evidence="1">
    <location>
        <begin position="181"/>
        <end position="182"/>
    </location>
    <ligand>
        <name>substrate</name>
    </ligand>
</feature>
<feature type="site" description="Transition state stabilizer" evidence="1">
    <location>
        <position position="180"/>
    </location>
</feature>
<accession>Q821N6</accession>
<gene>
    <name evidence="1" type="primary">gpmA</name>
    <name type="ordered locus">CCA_00904</name>
</gene>
<protein>
    <recommendedName>
        <fullName evidence="1">2,3-bisphosphoglycerate-dependent phosphoglycerate mutase</fullName>
        <shortName evidence="1">BPG-dependent PGAM</shortName>
        <shortName evidence="1">PGAM</shortName>
        <shortName evidence="1">Phosphoglyceromutase</shortName>
        <shortName evidence="1">dPGM</shortName>
        <ecNumber evidence="1">5.4.2.11</ecNumber>
    </recommendedName>
</protein>
<organism>
    <name type="scientific">Chlamydia caviae (strain ATCC VR-813 / DSM 19441 / 03DC25 / GPIC)</name>
    <name type="common">Chlamydophila caviae</name>
    <dbReference type="NCBI Taxonomy" id="227941"/>
    <lineage>
        <taxon>Bacteria</taxon>
        <taxon>Pseudomonadati</taxon>
        <taxon>Chlamydiota</taxon>
        <taxon>Chlamydiia</taxon>
        <taxon>Chlamydiales</taxon>
        <taxon>Chlamydiaceae</taxon>
        <taxon>Chlamydia/Chlamydophila group</taxon>
        <taxon>Chlamydia</taxon>
    </lineage>
</organism>
<sequence length="227" mass="26006">MAFLILLRHGKSVWNEKNLFTGWVDIPLSQQGIDEAIHAGQVIKDLPIDCIFTSSLVRSLMTALLAMTHHSSKKIPYIIHDDEQQKLMSRIYSDEEKSMIPLYRSSALNERMYGELQGKNKKETAEEFGEEQVKLWRRSYKISPPGGESLYDTGLRTVPYFQETIFPLLKNSKNVFISAHGNSLRSLIMDIEKLSEEEVLSLELPTGKPIVYLWTGHTFERHPEPLG</sequence>
<reference key="1">
    <citation type="journal article" date="2003" name="Nucleic Acids Res.">
        <title>Genome sequence of Chlamydophila caviae (Chlamydia psittaci GPIC): examining the role of niche-specific genes in the evolution of the Chlamydiaceae.</title>
        <authorList>
            <person name="Read T.D."/>
            <person name="Myers G.S.A."/>
            <person name="Brunham R.C."/>
            <person name="Nelson W.C."/>
            <person name="Paulsen I.T."/>
            <person name="Heidelberg J.F."/>
            <person name="Holtzapple E.K."/>
            <person name="Khouri H.M."/>
            <person name="Federova N.B."/>
            <person name="Carty H.A."/>
            <person name="Umayam L.A."/>
            <person name="Haft D.H."/>
            <person name="Peterson J.D."/>
            <person name="Beanan M.J."/>
            <person name="White O."/>
            <person name="Salzberg S.L."/>
            <person name="Hsia R.-C."/>
            <person name="McClarty G."/>
            <person name="Rank R.G."/>
            <person name="Bavoil P.M."/>
            <person name="Fraser C.M."/>
        </authorList>
    </citation>
    <scope>NUCLEOTIDE SEQUENCE [LARGE SCALE GENOMIC DNA]</scope>
    <source>
        <strain>ATCC VR-813 / DSM 19441 / 03DC25 / GPIC</strain>
    </source>
</reference>
<comment type="function">
    <text evidence="1">Catalyzes the interconversion of 2-phosphoglycerate and 3-phosphoglycerate.</text>
</comment>
<comment type="catalytic activity">
    <reaction evidence="1">
        <text>(2R)-2-phosphoglycerate = (2R)-3-phosphoglycerate</text>
        <dbReference type="Rhea" id="RHEA:15901"/>
        <dbReference type="ChEBI" id="CHEBI:58272"/>
        <dbReference type="ChEBI" id="CHEBI:58289"/>
        <dbReference type="EC" id="5.4.2.11"/>
    </reaction>
</comment>
<comment type="pathway">
    <text evidence="1">Carbohydrate degradation; glycolysis; pyruvate from D-glyceraldehyde 3-phosphate: step 3/5.</text>
</comment>
<comment type="similarity">
    <text evidence="1">Belongs to the phosphoglycerate mutase family. BPG-dependent PGAM subfamily.</text>
</comment>
<name>GPMA_CHLCV</name>
<proteinExistence type="inferred from homology"/>
<dbReference type="EC" id="5.4.2.11" evidence="1"/>
<dbReference type="EMBL" id="AE015925">
    <property type="protein sequence ID" value="AAP05643.1"/>
    <property type="molecule type" value="Genomic_DNA"/>
</dbReference>
<dbReference type="RefSeq" id="WP_011006857.1">
    <property type="nucleotide sequence ID" value="NC_003361.3"/>
</dbReference>
<dbReference type="SMR" id="Q821N6"/>
<dbReference type="STRING" id="227941.CCA_00904"/>
<dbReference type="KEGG" id="cca:CCA_00904"/>
<dbReference type="eggNOG" id="COG0588">
    <property type="taxonomic scope" value="Bacteria"/>
</dbReference>
<dbReference type="HOGENOM" id="CLU_033323_1_4_0"/>
<dbReference type="OrthoDB" id="9781415at2"/>
<dbReference type="UniPathway" id="UPA00109">
    <property type="reaction ID" value="UER00186"/>
</dbReference>
<dbReference type="Proteomes" id="UP000002193">
    <property type="component" value="Chromosome"/>
</dbReference>
<dbReference type="GO" id="GO:0004619">
    <property type="term" value="F:phosphoglycerate mutase activity"/>
    <property type="evidence" value="ECO:0007669"/>
    <property type="project" value="UniProtKB-EC"/>
</dbReference>
<dbReference type="GO" id="GO:0006094">
    <property type="term" value="P:gluconeogenesis"/>
    <property type="evidence" value="ECO:0007669"/>
    <property type="project" value="UniProtKB-UniRule"/>
</dbReference>
<dbReference type="GO" id="GO:0006096">
    <property type="term" value="P:glycolytic process"/>
    <property type="evidence" value="ECO:0007669"/>
    <property type="project" value="UniProtKB-UniRule"/>
</dbReference>
<dbReference type="CDD" id="cd07067">
    <property type="entry name" value="HP_PGM_like"/>
    <property type="match status" value="1"/>
</dbReference>
<dbReference type="Gene3D" id="3.40.50.1240">
    <property type="entry name" value="Phosphoglycerate mutase-like"/>
    <property type="match status" value="1"/>
</dbReference>
<dbReference type="HAMAP" id="MF_01039">
    <property type="entry name" value="PGAM_GpmA"/>
    <property type="match status" value="1"/>
</dbReference>
<dbReference type="InterPro" id="IPR013078">
    <property type="entry name" value="His_Pase_superF_clade-1"/>
</dbReference>
<dbReference type="InterPro" id="IPR029033">
    <property type="entry name" value="His_PPase_superfam"/>
</dbReference>
<dbReference type="InterPro" id="IPR005952">
    <property type="entry name" value="Phosphogly_mut1"/>
</dbReference>
<dbReference type="NCBIfam" id="NF002217">
    <property type="entry name" value="PRK01112.1"/>
    <property type="match status" value="1"/>
</dbReference>
<dbReference type="PANTHER" id="PTHR11931">
    <property type="entry name" value="PHOSPHOGLYCERATE MUTASE"/>
    <property type="match status" value="1"/>
</dbReference>
<dbReference type="Pfam" id="PF00300">
    <property type="entry name" value="His_Phos_1"/>
    <property type="match status" value="2"/>
</dbReference>
<dbReference type="SMART" id="SM00855">
    <property type="entry name" value="PGAM"/>
    <property type="match status" value="1"/>
</dbReference>
<dbReference type="SUPFAM" id="SSF53254">
    <property type="entry name" value="Phosphoglycerate mutase-like"/>
    <property type="match status" value="1"/>
</dbReference>